<sequence>MHSPPRDQAAIMLWKLVENVKYEDIYEDRHDGVPSHSSRLSQLGSVSQGPYSSAPPLSHTPSSDFQPPYFPPPYQPLPYHQSQDPYSHVNDPYSLNPLHQPQQHPWGQRQRQEVGSEAGSLLPQPRAALPQLSGLDPRRDYHSVRRPDVLLHSAHHGLDAGMGDSLSLHGLGHPGMEDVQSVEDANNSGMNLLDQSVIKKVPVPPKSVTSLMMNKDGFLGGMSVNTGEVFCSVPGRLSLLSSTSKYKVTVGEVQRRLSPPECLNASLLGGVLRRAKSKNGGRSLRERLEKIGLNLPAGRRKAANVTLLTSLVEGEAVHLARDFGYICETEFPAKAVSEYLNRQHTDPSDLHSRKNMLLATKQLCKEFTDLLAQDRTPIGNSRPSPILEPGIQSCLTHFSLITHGFGAPAICAALTALQNYLTEALKGMDKMFLNNTTTNRHTSGEGPGSKTGDKEEKHRK</sequence>
<reference key="1">
    <citation type="journal article" date="1997" name="Genes Dev.">
        <title>Enhanced apoptotic cell death of renal epithelial cells in mice lacking transcription factor AP-2beta.</title>
        <authorList>
            <person name="Moser M."/>
            <person name="Buettner R."/>
        </authorList>
    </citation>
    <scope>NUCLEOTIDE SEQUENCE [GENOMIC DNA] (ISOFORM 1)</scope>
</reference>
<reference key="2">
    <citation type="journal article" date="2003" name="Nature">
        <title>The DNA sequence and analysis of human chromosome 6.</title>
        <authorList>
            <person name="Mungall A.J."/>
            <person name="Palmer S.A."/>
            <person name="Sims S.K."/>
            <person name="Edwards C.A."/>
            <person name="Ashurst J.L."/>
            <person name="Wilming L."/>
            <person name="Jones M.C."/>
            <person name="Horton R."/>
            <person name="Hunt S.E."/>
            <person name="Scott C.E."/>
            <person name="Gilbert J.G.R."/>
            <person name="Clamp M.E."/>
            <person name="Bethel G."/>
            <person name="Milne S."/>
            <person name="Ainscough R."/>
            <person name="Almeida J.P."/>
            <person name="Ambrose K.D."/>
            <person name="Andrews T.D."/>
            <person name="Ashwell R.I.S."/>
            <person name="Babbage A.K."/>
            <person name="Bagguley C.L."/>
            <person name="Bailey J."/>
            <person name="Banerjee R."/>
            <person name="Barker D.J."/>
            <person name="Barlow K.F."/>
            <person name="Bates K."/>
            <person name="Beare D.M."/>
            <person name="Beasley H."/>
            <person name="Beasley O."/>
            <person name="Bird C.P."/>
            <person name="Blakey S.E."/>
            <person name="Bray-Allen S."/>
            <person name="Brook J."/>
            <person name="Brown A.J."/>
            <person name="Brown J.Y."/>
            <person name="Burford D.C."/>
            <person name="Burrill W."/>
            <person name="Burton J."/>
            <person name="Carder C."/>
            <person name="Carter N.P."/>
            <person name="Chapman J.C."/>
            <person name="Clark S.Y."/>
            <person name="Clark G."/>
            <person name="Clee C.M."/>
            <person name="Clegg S."/>
            <person name="Cobley V."/>
            <person name="Collier R.E."/>
            <person name="Collins J.E."/>
            <person name="Colman L.K."/>
            <person name="Corby N.R."/>
            <person name="Coville G.J."/>
            <person name="Culley K.M."/>
            <person name="Dhami P."/>
            <person name="Davies J."/>
            <person name="Dunn M."/>
            <person name="Earthrowl M.E."/>
            <person name="Ellington A.E."/>
            <person name="Evans K.A."/>
            <person name="Faulkner L."/>
            <person name="Francis M.D."/>
            <person name="Frankish A."/>
            <person name="Frankland J."/>
            <person name="French L."/>
            <person name="Garner P."/>
            <person name="Garnett J."/>
            <person name="Ghori M.J."/>
            <person name="Gilby L.M."/>
            <person name="Gillson C.J."/>
            <person name="Glithero R.J."/>
            <person name="Grafham D.V."/>
            <person name="Grant M."/>
            <person name="Gribble S."/>
            <person name="Griffiths C."/>
            <person name="Griffiths M.N.D."/>
            <person name="Hall R."/>
            <person name="Halls K.S."/>
            <person name="Hammond S."/>
            <person name="Harley J.L."/>
            <person name="Hart E.A."/>
            <person name="Heath P.D."/>
            <person name="Heathcott R."/>
            <person name="Holmes S.J."/>
            <person name="Howden P.J."/>
            <person name="Howe K.L."/>
            <person name="Howell G.R."/>
            <person name="Huckle E."/>
            <person name="Humphray S.J."/>
            <person name="Humphries M.D."/>
            <person name="Hunt A.R."/>
            <person name="Johnson C.M."/>
            <person name="Joy A.A."/>
            <person name="Kay M."/>
            <person name="Keenan S.J."/>
            <person name="Kimberley A.M."/>
            <person name="King A."/>
            <person name="Laird G.K."/>
            <person name="Langford C."/>
            <person name="Lawlor S."/>
            <person name="Leongamornlert D.A."/>
            <person name="Leversha M."/>
            <person name="Lloyd C.R."/>
            <person name="Lloyd D.M."/>
            <person name="Loveland J.E."/>
            <person name="Lovell J."/>
            <person name="Martin S."/>
            <person name="Mashreghi-Mohammadi M."/>
            <person name="Maslen G.L."/>
            <person name="Matthews L."/>
            <person name="McCann O.T."/>
            <person name="McLaren S.J."/>
            <person name="McLay K."/>
            <person name="McMurray A."/>
            <person name="Moore M.J.F."/>
            <person name="Mullikin J.C."/>
            <person name="Niblett D."/>
            <person name="Nickerson T."/>
            <person name="Novik K.L."/>
            <person name="Oliver K."/>
            <person name="Overton-Larty E.K."/>
            <person name="Parker A."/>
            <person name="Patel R."/>
            <person name="Pearce A.V."/>
            <person name="Peck A.I."/>
            <person name="Phillimore B.J.C.T."/>
            <person name="Phillips S."/>
            <person name="Plumb R.W."/>
            <person name="Porter K.M."/>
            <person name="Ramsey Y."/>
            <person name="Ranby S.A."/>
            <person name="Rice C.M."/>
            <person name="Ross M.T."/>
            <person name="Searle S.M."/>
            <person name="Sehra H.K."/>
            <person name="Sheridan E."/>
            <person name="Skuce C.D."/>
            <person name="Smith S."/>
            <person name="Smith M."/>
            <person name="Spraggon L."/>
            <person name="Squares S.L."/>
            <person name="Steward C.A."/>
            <person name="Sycamore N."/>
            <person name="Tamlyn-Hall G."/>
            <person name="Tester J."/>
            <person name="Theaker A.J."/>
            <person name="Thomas D.W."/>
            <person name="Thorpe A."/>
            <person name="Tracey A."/>
            <person name="Tromans A."/>
            <person name="Tubby B."/>
            <person name="Wall M."/>
            <person name="Wallis J.M."/>
            <person name="West A.P."/>
            <person name="White S.S."/>
            <person name="Whitehead S.L."/>
            <person name="Whittaker H."/>
            <person name="Wild A."/>
            <person name="Willey D.J."/>
            <person name="Wilmer T.E."/>
            <person name="Wood J.M."/>
            <person name="Wray P.W."/>
            <person name="Wyatt J.C."/>
            <person name="Young L."/>
            <person name="Younger R.M."/>
            <person name="Bentley D.R."/>
            <person name="Coulson A."/>
            <person name="Durbin R.M."/>
            <person name="Hubbard T."/>
            <person name="Sulston J.E."/>
            <person name="Dunham I."/>
            <person name="Rogers J."/>
            <person name="Beck S."/>
        </authorList>
    </citation>
    <scope>NUCLEOTIDE SEQUENCE [LARGE SCALE GENOMIC DNA]</scope>
</reference>
<reference key="3">
    <citation type="journal article" date="2004" name="Genome Res.">
        <title>The status, quality, and expansion of the NIH full-length cDNA project: the Mammalian Gene Collection (MGC).</title>
        <authorList>
            <consortium name="The MGC Project Team"/>
        </authorList>
    </citation>
    <scope>NUCLEOTIDE SEQUENCE [LARGE SCALE MRNA] (ISOFORM 1)</scope>
    <source>
        <tissue>Skin</tissue>
    </source>
</reference>
<reference key="4">
    <citation type="submission" date="2000-06" db="EMBL/GenBank/DDBJ databases">
        <title>Characterisation of the human AP-2beta and AP-2gamma genes.</title>
        <authorList>
            <person name="Hasleton M.D."/>
            <person name="Skinner A."/>
            <person name="Hurst H.C."/>
        </authorList>
    </citation>
    <scope>NUCLEOTIDE SEQUENCE [GENOMIC DNA] OF 1-27</scope>
</reference>
<reference key="5">
    <citation type="journal article" date="1996" name="Genomics">
        <title>Chromosomal mapping of the human and mouse homologues of two new members of the AP-2 family of transcription factors.</title>
        <authorList>
            <person name="Williamson J.A."/>
            <person name="Bosher J.M."/>
            <person name="Skinner A."/>
            <person name="Sheer D."/>
            <person name="Williams T."/>
            <person name="Hurst H.C."/>
        </authorList>
    </citation>
    <scope>NUCLEOTIDE SEQUENCE [MRNA] OF 2-460 (ISOFORM 1)</scope>
    <source>
        <tissue>Mammary tumor</tissue>
    </source>
</reference>
<reference key="6">
    <citation type="journal article" date="2001" name="Nat. Genet.">
        <title>Cardiac malformations, adrenal agenesis, neural crest defects and exencephaly in mice lacking Cited2, a new Tfap2 co-activator.</title>
        <authorList>
            <person name="Bamforth S.D."/>
            <person name="Braganca J."/>
            <person name="Eloranta J.J."/>
            <person name="Murdoch J.N."/>
            <person name="Marques F.I."/>
            <person name="Kranc K.R."/>
            <person name="Farza H."/>
            <person name="Henderson D.J."/>
            <person name="Hurst H.C."/>
            <person name="Bhattacharya S."/>
        </authorList>
    </citation>
    <scope>FUNCTION</scope>
    <scope>INTERACTION WITH CITED2</scope>
</reference>
<reference key="7">
    <citation type="journal article" date="2002" name="J. Biol. Chem.">
        <title>Human CREB-binding protein/p300-interacting transactivator with ED-rich tail (CITED) 4, a new member of the CITED family, functions as a co-activator for transcription factor AP-2.</title>
        <authorList>
            <person name="Braganca J."/>
            <person name="Swingler T."/>
            <person name="Marques F.I.R."/>
            <person name="Jones T."/>
            <person name="Eloranta J.J."/>
            <person name="Hurst H.C."/>
            <person name="Shioda T."/>
            <person name="Bhattacharya S."/>
        </authorList>
    </citation>
    <scope>INTERACTION WITH CITED4</scope>
</reference>
<reference key="8">
    <citation type="journal article" date="2002" name="J. Biol. Chem.">
        <title>Transcription factor AP-2 interacts with the SUMO-conjugating enzyme UBC9 and is sumolated in vivo.</title>
        <authorList>
            <person name="Eloranta J.J."/>
            <person name="Hurst H.C."/>
        </authorList>
    </citation>
    <scope>INTERACTION WITH UBE2I</scope>
    <scope>SUMOYLATION AT LYS-21</scope>
</reference>
<reference key="9">
    <citation type="journal article" date="2003" name="J. Biol. Chem.">
        <title>Physical and functional interactions among AP-2 transcription factors, p300/CREB-binding protein, and CITED2.</title>
        <authorList>
            <person name="Braganca J."/>
            <person name="Eloranta J.J."/>
            <person name="Bamforth S.D."/>
            <person name="Ibbitt J.C."/>
            <person name="Hurst H.C."/>
            <person name="Bhattacharya S."/>
        </authorList>
    </citation>
    <scope>INTERACTION WITH CITED2</scope>
</reference>
<reference key="10">
    <citation type="journal article" date="2005" name="Proc. Natl. Acad. Sci. U.S.A.">
        <title>Syndromic patent ductus arteriosus: evidence for haploinsufficient TFAP2B mutations and identification of a linked sleep disorder.</title>
        <authorList>
            <person name="Mani A."/>
            <person name="Radhakrishnan J."/>
            <person name="Farhi A."/>
            <person name="Carew K.S."/>
            <person name="Warnes C.A."/>
            <person name="Nelson-Williams C."/>
            <person name="Day R.W."/>
            <person name="Pober B."/>
            <person name="State M.W."/>
            <person name="Lifton R.P."/>
        </authorList>
    </citation>
    <scope>INVOLVEMENT IN CHAR</scope>
</reference>
<reference key="11">
    <citation type="journal article" date="2009" name="J. Cell. Biochem.">
        <title>The interaction of KCTD1 with transcription factor AP-2alpha inhibits its transactivation.</title>
        <authorList>
            <person name="Ding X."/>
            <person name="Luo C."/>
            <person name="Zhou J."/>
            <person name="Zhong Y."/>
            <person name="Hu X."/>
            <person name="Zhou F."/>
            <person name="Ren K."/>
            <person name="Gan L."/>
            <person name="He A."/>
            <person name="Zhu J."/>
            <person name="Gao X."/>
            <person name="Zhang J."/>
        </authorList>
    </citation>
    <scope>INTERACTION WITH KCTD1</scope>
</reference>
<reference key="12">
    <citation type="journal article" date="2008" name="Genet. Test.">
        <title>Novel TFAP2B mutation in nonsyndromic patent ductus arteriosus.</title>
        <authorList>
            <person name="Khetyar M."/>
            <person name="Syrris P."/>
            <person name="Tinworth L."/>
            <person name="Abushaban L."/>
            <person name="Carter N."/>
        </authorList>
    </citation>
    <scope>INVOLVEMENT IN PDA2</scope>
</reference>
<reference key="13">
    <citation type="journal article" date="2011" name="Pediatr. Cardiol.">
        <title>Familial nonsyndromic patent ductus arteriosus caused by mutations in TFAP2B.</title>
        <authorList>
            <person name="Chen Y.W."/>
            <person name="Zhao W."/>
            <person name="Zhang Z.F."/>
            <person name="Fu Q."/>
            <person name="Shen J."/>
            <person name="Zhang Z."/>
            <person name="Ji W."/>
            <person name="Wang J."/>
            <person name="Li F."/>
        </authorList>
    </citation>
    <scope>INVOLVEMENT IN PDA2</scope>
</reference>
<reference key="14">
    <citation type="journal article" date="2000" name="Nat. Genet.">
        <title>Mutations in TFAP2B cause Char syndrome, a familial form of patent ductus arteriosus.</title>
        <authorList>
            <person name="Satoda M."/>
            <person name="Zhao F."/>
            <person name="Diaz G.A."/>
            <person name="Burn J."/>
            <person name="Goodship J."/>
            <person name="Davidson H.R."/>
            <person name="Pierpont M.E.M."/>
            <person name="Gelb B.D."/>
        </authorList>
    </citation>
    <scope>VARIANTS CHAR ASP-275 AND CYS-300</scope>
</reference>
<reference key="15">
    <citation type="journal article" date="2001" name="Am. J. Hum. Genet.">
        <title>Novel TFAP2B mutations that cause Char syndrome provide a genotype-phenotype correlation.</title>
        <authorList>
            <person name="Zhao F."/>
            <person name="Weismann C.G."/>
            <person name="Satoda M."/>
            <person name="Pierpont M.E.M."/>
            <person name="Sweeney E."/>
            <person name="Thompson E.M."/>
            <person name="Gelb B.D."/>
        </authorList>
    </citation>
    <scope>VARIANTS CHAR ARG-73; CYS-236; SER-236 AND GLN-285</scope>
</reference>
<dbReference type="EMBL" id="Y09912">
    <property type="protein sequence ID" value="CAA71047.1"/>
    <property type="status" value="ALT_INIT"/>
    <property type="molecule type" value="Genomic_DNA"/>
</dbReference>
<dbReference type="EMBL" id="AL031224">
    <property type="status" value="NOT_ANNOTATED_CDS"/>
    <property type="molecule type" value="Genomic_DNA"/>
</dbReference>
<dbReference type="EMBL" id="AL049693">
    <property type="status" value="NOT_ANNOTATED_CDS"/>
    <property type="molecule type" value="Genomic_DNA"/>
</dbReference>
<dbReference type="EMBL" id="BC037225">
    <property type="protein sequence ID" value="AAH37225.2"/>
    <property type="molecule type" value="mRNA"/>
</dbReference>
<dbReference type="EMBL" id="AJ278356">
    <property type="protein sequence ID" value="CAC01130.1"/>
    <property type="status" value="ALT_INIT"/>
    <property type="molecule type" value="Genomic_DNA"/>
</dbReference>
<dbReference type="EMBL" id="X95694">
    <property type="protein sequence ID" value="CAA64990.1"/>
    <property type="status" value="ALT_INIT"/>
    <property type="molecule type" value="mRNA"/>
</dbReference>
<dbReference type="CCDS" id="CCDS4934.2">
    <molecule id="Q92481-1"/>
</dbReference>
<dbReference type="RefSeq" id="NP_003212.2">
    <molecule id="Q92481-1"/>
    <property type="nucleotide sequence ID" value="NM_003221.4"/>
</dbReference>
<dbReference type="RefSeq" id="XP_011513139.1">
    <molecule id="Q92481-2"/>
    <property type="nucleotide sequence ID" value="XM_011514837.3"/>
</dbReference>
<dbReference type="RefSeq" id="XP_054212258.1">
    <molecule id="Q92481-2"/>
    <property type="nucleotide sequence ID" value="XM_054356283.1"/>
</dbReference>
<dbReference type="PDB" id="8J0Q">
    <property type="method" value="X-ray"/>
    <property type="resolution" value="2.40 A"/>
    <property type="chains" value="A/B=219-457"/>
</dbReference>
<dbReference type="PDBsum" id="8J0Q"/>
<dbReference type="SMR" id="Q92481"/>
<dbReference type="BioGRID" id="112879">
    <property type="interactions" value="20"/>
</dbReference>
<dbReference type="FunCoup" id="Q92481">
    <property type="interactions" value="1154"/>
</dbReference>
<dbReference type="IntAct" id="Q92481">
    <property type="interactions" value="16"/>
</dbReference>
<dbReference type="STRING" id="9606.ENSP00000377265"/>
<dbReference type="GlyGen" id="Q92481">
    <property type="glycosylation" value="1 site, 1 O-linked glycan (1 site)"/>
</dbReference>
<dbReference type="iPTMnet" id="Q92481"/>
<dbReference type="PhosphoSitePlus" id="Q92481"/>
<dbReference type="BioMuta" id="TFAP2B"/>
<dbReference type="DMDM" id="152031557"/>
<dbReference type="jPOST" id="Q92481"/>
<dbReference type="MassIVE" id="Q92481"/>
<dbReference type="PaxDb" id="9606-ENSP00000377265"/>
<dbReference type="PeptideAtlas" id="Q92481"/>
<dbReference type="ProteomicsDB" id="75261">
    <molecule id="Q92481-1"/>
</dbReference>
<dbReference type="ProteomicsDB" id="75262">
    <molecule id="Q92481-2"/>
</dbReference>
<dbReference type="Antibodypedia" id="4175">
    <property type="antibodies" value="375 antibodies from 31 providers"/>
</dbReference>
<dbReference type="DNASU" id="7021"/>
<dbReference type="Ensembl" id="ENST00000393655.4">
    <molecule id="Q92481-1"/>
    <property type="protein sequence ID" value="ENSP00000377265.2"/>
    <property type="gene ID" value="ENSG00000008196.13"/>
</dbReference>
<dbReference type="GeneID" id="7021"/>
<dbReference type="KEGG" id="hsa:7021"/>
<dbReference type="MANE-Select" id="ENST00000393655.4">
    <property type="protein sequence ID" value="ENSP00000377265.2"/>
    <property type="RefSeq nucleotide sequence ID" value="NM_003221.4"/>
    <property type="RefSeq protein sequence ID" value="NP_003212.2"/>
</dbReference>
<dbReference type="UCSC" id="uc003pag.4">
    <molecule id="Q92481-1"/>
    <property type="organism name" value="human"/>
</dbReference>
<dbReference type="AGR" id="HGNC:11743"/>
<dbReference type="CTD" id="7021"/>
<dbReference type="DisGeNET" id="7021"/>
<dbReference type="GeneCards" id="TFAP2B"/>
<dbReference type="GeneReviews" id="TFAP2B"/>
<dbReference type="HGNC" id="HGNC:11743">
    <property type="gene designation" value="TFAP2B"/>
</dbReference>
<dbReference type="HPA" id="ENSG00000008196">
    <property type="expression patterns" value="Tissue enhanced (epididymis, retina)"/>
</dbReference>
<dbReference type="MalaCards" id="TFAP2B"/>
<dbReference type="MIM" id="169100">
    <property type="type" value="phenotype"/>
</dbReference>
<dbReference type="MIM" id="601601">
    <property type="type" value="gene"/>
</dbReference>
<dbReference type="MIM" id="617035">
    <property type="type" value="phenotype"/>
</dbReference>
<dbReference type="neXtProt" id="NX_Q92481"/>
<dbReference type="OpenTargets" id="ENSG00000008196"/>
<dbReference type="Orphanet" id="46627">
    <property type="disease" value="Char syndrome"/>
</dbReference>
<dbReference type="Orphanet" id="466729">
    <property type="disease" value="Familial patent arterial duct"/>
</dbReference>
<dbReference type="PharmGKB" id="PA36460"/>
<dbReference type="VEuPathDB" id="HostDB:ENSG00000008196"/>
<dbReference type="eggNOG" id="KOG3811">
    <property type="taxonomic scope" value="Eukaryota"/>
</dbReference>
<dbReference type="GeneTree" id="ENSGT00950000182848"/>
<dbReference type="HOGENOM" id="CLU_035175_4_1_1"/>
<dbReference type="InParanoid" id="Q92481"/>
<dbReference type="OMA" id="NNNPNRH"/>
<dbReference type="OrthoDB" id="6252992at2759"/>
<dbReference type="PAN-GO" id="Q92481">
    <property type="GO annotations" value="6 GO annotations based on evolutionary models"/>
</dbReference>
<dbReference type="PhylomeDB" id="Q92481"/>
<dbReference type="TreeFam" id="TF313718"/>
<dbReference type="PathwayCommons" id="Q92481"/>
<dbReference type="Reactome" id="R-HSA-3232118">
    <property type="pathway name" value="SUMOylation of transcription factors"/>
</dbReference>
<dbReference type="Reactome" id="R-HSA-8866904">
    <property type="pathway name" value="Negative regulation of activity of TFAP2 (AP-2) family transcription factors"/>
</dbReference>
<dbReference type="Reactome" id="R-HSA-8866907">
    <property type="pathway name" value="Activation of the TFAP2 (AP-2) family of transcription factors"/>
</dbReference>
<dbReference type="Reactome" id="R-HSA-8866910">
    <property type="pathway name" value="TFAP2 (AP-2) family regulates transcription of growth factors and their receptors"/>
</dbReference>
<dbReference type="Reactome" id="R-HSA-9834899">
    <property type="pathway name" value="Specification of the neural plate border"/>
</dbReference>
<dbReference type="SignaLink" id="Q92481"/>
<dbReference type="SIGNOR" id="Q92481"/>
<dbReference type="BioGRID-ORCS" id="7021">
    <property type="hits" value="21 hits in 1175 CRISPR screens"/>
</dbReference>
<dbReference type="ChiTaRS" id="TFAP2B">
    <property type="organism name" value="human"/>
</dbReference>
<dbReference type="GeneWiki" id="TFAP2B"/>
<dbReference type="GenomeRNAi" id="7021"/>
<dbReference type="Pharos" id="Q92481">
    <property type="development level" value="Tbio"/>
</dbReference>
<dbReference type="PRO" id="PR:Q92481"/>
<dbReference type="Proteomes" id="UP000005640">
    <property type="component" value="Chromosome 6"/>
</dbReference>
<dbReference type="RNAct" id="Q92481">
    <property type="molecule type" value="protein"/>
</dbReference>
<dbReference type="Bgee" id="ENSG00000008196">
    <property type="expression patterns" value="Expressed in corpus epididymis and 90 other cell types or tissues"/>
</dbReference>
<dbReference type="ExpressionAtlas" id="Q92481">
    <property type="expression patterns" value="baseline and differential"/>
</dbReference>
<dbReference type="GO" id="GO:0000785">
    <property type="term" value="C:chromatin"/>
    <property type="evidence" value="ECO:0000247"/>
    <property type="project" value="NTNU_SB"/>
</dbReference>
<dbReference type="GO" id="GO:0005654">
    <property type="term" value="C:nucleoplasm"/>
    <property type="evidence" value="ECO:0000304"/>
    <property type="project" value="Reactome"/>
</dbReference>
<dbReference type="GO" id="GO:0005634">
    <property type="term" value="C:nucleus"/>
    <property type="evidence" value="ECO:0000314"/>
    <property type="project" value="UniProtKB"/>
</dbReference>
<dbReference type="GO" id="GO:0003682">
    <property type="term" value="F:chromatin binding"/>
    <property type="evidence" value="ECO:0007669"/>
    <property type="project" value="Ensembl"/>
</dbReference>
<dbReference type="GO" id="GO:0000987">
    <property type="term" value="F:cis-regulatory region sequence-specific DNA binding"/>
    <property type="evidence" value="ECO:0000314"/>
    <property type="project" value="UniProtKB"/>
</dbReference>
<dbReference type="GO" id="GO:0003677">
    <property type="term" value="F:DNA binding"/>
    <property type="evidence" value="ECO:0000304"/>
    <property type="project" value="UniProtKB"/>
</dbReference>
<dbReference type="GO" id="GO:0001228">
    <property type="term" value="F:DNA-binding transcription activator activity, RNA polymerase II-specific"/>
    <property type="evidence" value="ECO:0000314"/>
    <property type="project" value="GO_Central"/>
</dbReference>
<dbReference type="GO" id="GO:0003700">
    <property type="term" value="F:DNA-binding transcription factor activity"/>
    <property type="evidence" value="ECO:0000314"/>
    <property type="project" value="UniProtKB"/>
</dbReference>
<dbReference type="GO" id="GO:0000981">
    <property type="term" value="F:DNA-binding transcription factor activity, RNA polymerase II-specific"/>
    <property type="evidence" value="ECO:0000314"/>
    <property type="project" value="GO_Central"/>
</dbReference>
<dbReference type="GO" id="GO:0046982">
    <property type="term" value="F:protein heterodimerization activity"/>
    <property type="evidence" value="ECO:0000353"/>
    <property type="project" value="UniProtKB"/>
</dbReference>
<dbReference type="GO" id="GO:0042803">
    <property type="term" value="F:protein homodimerization activity"/>
    <property type="evidence" value="ECO:0000353"/>
    <property type="project" value="UniProtKB"/>
</dbReference>
<dbReference type="GO" id="GO:0000978">
    <property type="term" value="F:RNA polymerase II cis-regulatory region sequence-specific DNA binding"/>
    <property type="evidence" value="ECO:0000314"/>
    <property type="project" value="GO_Central"/>
</dbReference>
<dbReference type="GO" id="GO:0000977">
    <property type="term" value="F:RNA polymerase II transcription regulatory region sequence-specific DNA binding"/>
    <property type="evidence" value="ECO:0000318"/>
    <property type="project" value="GO_Central"/>
</dbReference>
<dbReference type="GO" id="GO:0043565">
    <property type="term" value="F:sequence-specific DNA binding"/>
    <property type="evidence" value="ECO:0000314"/>
    <property type="project" value="UniProtKB"/>
</dbReference>
<dbReference type="GO" id="GO:1990837">
    <property type="term" value="F:sequence-specific double-stranded DNA binding"/>
    <property type="evidence" value="ECO:0000314"/>
    <property type="project" value="ARUK-UCL"/>
</dbReference>
<dbReference type="GO" id="GO:0035909">
    <property type="term" value="P:aorta morphogenesis"/>
    <property type="evidence" value="ECO:0000250"/>
    <property type="project" value="UniProtKB"/>
</dbReference>
<dbReference type="GO" id="GO:0072044">
    <property type="term" value="P:collecting duct development"/>
    <property type="evidence" value="ECO:0000250"/>
    <property type="project" value="UniProtKB"/>
</dbReference>
<dbReference type="GO" id="GO:0072017">
    <property type="term" value="P:distal tubule development"/>
    <property type="evidence" value="ECO:0000250"/>
    <property type="project" value="UniProtKB"/>
</dbReference>
<dbReference type="GO" id="GO:0097070">
    <property type="term" value="P:ductus arteriosus closure"/>
    <property type="evidence" value="ECO:0000250"/>
    <property type="project" value="UniProtKB"/>
</dbReference>
<dbReference type="GO" id="GO:0045444">
    <property type="term" value="P:fat cell differentiation"/>
    <property type="evidence" value="ECO:0000270"/>
    <property type="project" value="UniProtKB"/>
</dbReference>
<dbReference type="GO" id="GO:0035136">
    <property type="term" value="P:forelimb morphogenesis"/>
    <property type="evidence" value="ECO:0000250"/>
    <property type="project" value="UniProtKB"/>
</dbReference>
<dbReference type="GO" id="GO:0006006">
    <property type="term" value="P:glucose metabolic process"/>
    <property type="evidence" value="ECO:0000315"/>
    <property type="project" value="UniProtKB"/>
</dbReference>
<dbReference type="GO" id="GO:0035137">
    <property type="term" value="P:hindlimb morphogenesis"/>
    <property type="evidence" value="ECO:0000250"/>
    <property type="project" value="UniProtKB"/>
</dbReference>
<dbReference type="GO" id="GO:0001822">
    <property type="term" value="P:kidney development"/>
    <property type="evidence" value="ECO:0000250"/>
    <property type="project" value="UniProtKB"/>
</dbReference>
<dbReference type="GO" id="GO:0072210">
    <property type="term" value="P:metanephric nephron development"/>
    <property type="evidence" value="ECO:0007669"/>
    <property type="project" value="Ensembl"/>
</dbReference>
<dbReference type="GO" id="GO:0043066">
    <property type="term" value="P:negative regulation of apoptotic process"/>
    <property type="evidence" value="ECO:0000314"/>
    <property type="project" value="GO_Central"/>
</dbReference>
<dbReference type="GO" id="GO:0008285">
    <property type="term" value="P:negative regulation of cell population proliferation"/>
    <property type="evidence" value="ECO:0000314"/>
    <property type="project" value="UniProtKB"/>
</dbReference>
<dbReference type="GO" id="GO:0045892">
    <property type="term" value="P:negative regulation of DNA-templated transcription"/>
    <property type="evidence" value="ECO:0000314"/>
    <property type="project" value="UniProtKB"/>
</dbReference>
<dbReference type="GO" id="GO:0043524">
    <property type="term" value="P:negative regulation of neuron apoptotic process"/>
    <property type="evidence" value="ECO:0007669"/>
    <property type="project" value="Ensembl"/>
</dbReference>
<dbReference type="GO" id="GO:0000122">
    <property type="term" value="P:negative regulation of transcription by RNA polymerase II"/>
    <property type="evidence" value="ECO:0000314"/>
    <property type="project" value="UniProtKB"/>
</dbReference>
<dbReference type="GO" id="GO:0007399">
    <property type="term" value="P:nervous system development"/>
    <property type="evidence" value="ECO:0000318"/>
    <property type="project" value="GO_Central"/>
</dbReference>
<dbReference type="GO" id="GO:0051402">
    <property type="term" value="P:neuron apoptotic process"/>
    <property type="evidence" value="ECO:0007669"/>
    <property type="project" value="Ensembl"/>
</dbReference>
<dbReference type="GO" id="GO:0008284">
    <property type="term" value="P:positive regulation of cell population proliferation"/>
    <property type="evidence" value="ECO:0000314"/>
    <property type="project" value="UniProtKB"/>
</dbReference>
<dbReference type="GO" id="GO:0045893">
    <property type="term" value="P:positive regulation of DNA-templated transcription"/>
    <property type="evidence" value="ECO:0000314"/>
    <property type="project" value="GO_Central"/>
</dbReference>
<dbReference type="GO" id="GO:0043525">
    <property type="term" value="P:positive regulation of neuron apoptotic process"/>
    <property type="evidence" value="ECO:0000314"/>
    <property type="project" value="UniProtKB"/>
</dbReference>
<dbReference type="GO" id="GO:0045944">
    <property type="term" value="P:positive regulation of transcription by RNA polymerase II"/>
    <property type="evidence" value="ECO:0000314"/>
    <property type="project" value="HGNC-UCL"/>
</dbReference>
<dbReference type="GO" id="GO:0030510">
    <property type="term" value="P:regulation of BMP signaling pathway"/>
    <property type="evidence" value="ECO:0000250"/>
    <property type="project" value="UniProtKB"/>
</dbReference>
<dbReference type="GO" id="GO:0045595">
    <property type="term" value="P:regulation of cell differentiation"/>
    <property type="evidence" value="ECO:0000314"/>
    <property type="project" value="UniProtKB"/>
</dbReference>
<dbReference type="GO" id="GO:0042127">
    <property type="term" value="P:regulation of cell population proliferation"/>
    <property type="evidence" value="ECO:0000318"/>
    <property type="project" value="GO_Central"/>
</dbReference>
<dbReference type="GO" id="GO:0050796">
    <property type="term" value="P:regulation of insulin secretion"/>
    <property type="evidence" value="ECO:0000315"/>
    <property type="project" value="UniProtKB"/>
</dbReference>
<dbReference type="GO" id="GO:0009410">
    <property type="term" value="P:response to xenobiotic stimulus"/>
    <property type="evidence" value="ECO:0007669"/>
    <property type="project" value="Ensembl"/>
</dbReference>
<dbReference type="GO" id="GO:0010842">
    <property type="term" value="P:retina layer formation"/>
    <property type="evidence" value="ECO:0000270"/>
    <property type="project" value="UniProtKB"/>
</dbReference>
<dbReference type="GO" id="GO:0043588">
    <property type="term" value="P:skin development"/>
    <property type="evidence" value="ECO:0007669"/>
    <property type="project" value="Ensembl"/>
</dbReference>
<dbReference type="GO" id="GO:0048745">
    <property type="term" value="P:smooth muscle tissue development"/>
    <property type="evidence" value="ECO:0007669"/>
    <property type="project" value="Ensembl"/>
</dbReference>
<dbReference type="GO" id="GO:0048485">
    <property type="term" value="P:sympathetic nervous system development"/>
    <property type="evidence" value="ECO:0000250"/>
    <property type="project" value="UniProtKB"/>
</dbReference>
<dbReference type="GO" id="GO:0006366">
    <property type="term" value="P:transcription by RNA polymerase II"/>
    <property type="evidence" value="ECO:0007669"/>
    <property type="project" value="Ensembl"/>
</dbReference>
<dbReference type="InterPro" id="IPR004979">
    <property type="entry name" value="TF_AP2"/>
</dbReference>
<dbReference type="InterPro" id="IPR008122">
    <property type="entry name" value="TF_AP2_beta"/>
</dbReference>
<dbReference type="InterPro" id="IPR013854">
    <property type="entry name" value="TF_AP2_C"/>
</dbReference>
<dbReference type="PANTHER" id="PTHR10812">
    <property type="entry name" value="TRANSCRIPTION FACTOR AP-2"/>
    <property type="match status" value="1"/>
</dbReference>
<dbReference type="PANTHER" id="PTHR10812:SF14">
    <property type="entry name" value="TRANSCRIPTION FACTOR AP-2-BETA"/>
    <property type="match status" value="1"/>
</dbReference>
<dbReference type="Pfam" id="PF03299">
    <property type="entry name" value="TF_AP-2"/>
    <property type="match status" value="1"/>
</dbReference>
<dbReference type="PRINTS" id="PR01750">
    <property type="entry name" value="AP2BTNSCPFCT"/>
</dbReference>
<dbReference type="PRINTS" id="PR01748">
    <property type="entry name" value="AP2TNSCPFCT"/>
</dbReference>
<comment type="function">
    <text evidence="6">Sequence-specific DNA-binding protein that interacts with inducible viral and cellular enhancer elements to regulate transcription of selected genes. AP-2 factors bind to the consensus sequence 5'-GCCNNNGGC-3' and activate genes involved in a large spectrum of important biological functions including proper eye, face, body wall, limb and neural tube development. They also suppress a number of genes including MCAM/MUC18, C/EBP alpha and MYC. AP-2-beta appears to be required for normal face and limb development and for proper terminal differentiation and function of renal tubular epithelia.</text>
</comment>
<comment type="subunit">
    <text evidence="6 7 8 9 12">Binds DNA as a dimer. Can form homodimers or heterodimers with other AP-2 family members. Interacts with CITED4. Interacts with UBE2I. Interacts with KCTD1; this interaction represses transcription activation. Interacts with CITED2 (via C-terminus); the interaction stimulates TFAP2B-transcriptional activity.</text>
</comment>
<comment type="interaction">
    <interactant intactId="EBI-725275">
        <id>Q92481</id>
    </interactant>
    <interactant intactId="EBI-399080">
        <id>Q92993</id>
        <label>KAT5</label>
    </interactant>
    <organismsDiffer>false</organismsDiffer>
    <experiments>3</experiments>
</comment>
<comment type="interaction">
    <interactant intactId="EBI-725275">
        <id>Q92481</id>
    </interactant>
    <interactant intactId="EBI-11742507">
        <id>Q8TAP4-4</id>
        <label>LMO3</label>
    </interactant>
    <organismsDiffer>false</organismsDiffer>
    <experiments>3</experiments>
</comment>
<comment type="interaction">
    <interactant intactId="EBI-725275">
        <id>Q92481</id>
    </interactant>
    <interactant intactId="EBI-9090795">
        <id>Q15047-2</id>
        <label>SETDB1</label>
    </interactant>
    <organismsDiffer>false</organismsDiffer>
    <experiments>3</experiments>
</comment>
<comment type="interaction">
    <interactant intactId="EBI-725275">
        <id>Q92481</id>
    </interactant>
    <interactant intactId="EBI-359832">
        <id>P61981</id>
        <label>YWHAG</label>
    </interactant>
    <organismsDiffer>false</organismsDiffer>
    <experiments>3</experiments>
</comment>
<comment type="subcellular location">
    <subcellularLocation>
        <location evidence="2">Nucleus</location>
    </subcellularLocation>
    <text evidence="2">In the brain, localizes to the arcuate hypothalamic nucleus, the ventromedial hypothalamic nucleus and the accumbens nucleus of the ventral striatum.</text>
</comment>
<comment type="alternative products">
    <event type="alternative splicing"/>
    <isoform>
        <id>Q92481-1</id>
        <name>1</name>
        <sequence type="displayed"/>
    </isoform>
    <isoform>
        <id>Q92481-2</id>
        <name>2</name>
        <sequence type="described" ref="VSP_006408"/>
    </isoform>
</comment>
<comment type="PTM">
    <text evidence="15">Sumoylated on Lys-21; which inhibits transcriptional activity.</text>
</comment>
<comment type="disease" evidence="4 5 10">
    <disease id="DI-00294">
        <name>Char syndrome</name>
        <acronym>CHAR</acronym>
        <description>An autosomal dominant disorder characterized by patent ductus arteriosus (PDA), facial dysmorphism and hand anomalies.</description>
        <dbReference type="MIM" id="169100"/>
    </disease>
    <text>The disease is caused by variants affecting the gene represented in this entry.</text>
</comment>
<comment type="disease" evidence="11 13">
    <disease id="DI-04762">
        <name>Patent ductus arteriosus 2</name>
        <acronym>PDA2</acronym>
        <description>A congenital heart defect characterized by the persistent opening of fetal ductus arteriosus that fails to close after birth. Fetal ductus arteriosus connects the pulmonary artery to the descending aorta, allowing unoxygenated blood to bypass the lung and flow to the placenta. Normally, the ductus occludes shortly after birth.</description>
        <dbReference type="MIM" id="617035"/>
    </disease>
    <text>The disease is caused by variants affecting the gene represented in this entry.</text>
</comment>
<comment type="similarity">
    <text evidence="14">Belongs to the AP-2 family.</text>
</comment>
<comment type="sequence caution" evidence="14">
    <conflict type="erroneous initiation">
        <sequence resource="EMBL-CDS" id="CAA64990"/>
    </conflict>
    <text>Truncated N-terminus.</text>
</comment>
<comment type="sequence caution" evidence="14">
    <conflict type="erroneous initiation">
        <sequence resource="EMBL-CDS" id="CAA71047"/>
    </conflict>
    <text>Truncated N-terminus.</text>
</comment>
<comment type="sequence caution" evidence="14">
    <conflict type="erroneous initiation">
        <sequence resource="EMBL-CDS" id="CAC01130"/>
    </conflict>
    <text>Truncated N-terminus.</text>
</comment>
<comment type="online information" name="Wikipedia">
    <link uri="https://en.wikipedia.org/wiki/Activating_protein_2"/>
    <text>Activating protein 2 entry</text>
</comment>
<organism>
    <name type="scientific">Homo sapiens</name>
    <name type="common">Human</name>
    <dbReference type="NCBI Taxonomy" id="9606"/>
    <lineage>
        <taxon>Eukaryota</taxon>
        <taxon>Metazoa</taxon>
        <taxon>Chordata</taxon>
        <taxon>Craniata</taxon>
        <taxon>Vertebrata</taxon>
        <taxon>Euteleostomi</taxon>
        <taxon>Mammalia</taxon>
        <taxon>Eutheria</taxon>
        <taxon>Euarchontoglires</taxon>
        <taxon>Primates</taxon>
        <taxon>Haplorrhini</taxon>
        <taxon>Catarrhini</taxon>
        <taxon>Hominidae</taxon>
        <taxon>Homo</taxon>
    </lineage>
</organism>
<proteinExistence type="evidence at protein level"/>
<name>AP2B_HUMAN</name>
<keyword id="KW-0002">3D-structure</keyword>
<keyword id="KW-0010">Activator</keyword>
<keyword id="KW-0025">Alternative splicing</keyword>
<keyword id="KW-0225">Disease variant</keyword>
<keyword id="KW-0238">DNA-binding</keyword>
<keyword id="KW-1017">Isopeptide bond</keyword>
<keyword id="KW-0539">Nucleus</keyword>
<keyword id="KW-0597">Phosphoprotein</keyword>
<keyword id="KW-1267">Proteomics identification</keyword>
<keyword id="KW-1185">Reference proteome</keyword>
<keyword id="KW-0804">Transcription</keyword>
<keyword id="KW-0805">Transcription regulation</keyword>
<keyword id="KW-0832">Ubl conjugation</keyword>
<protein>
    <recommendedName>
        <fullName>Transcription factor AP-2-beta</fullName>
        <shortName>AP2-beta</shortName>
    </recommendedName>
    <alternativeName>
        <fullName>Activating enhancer-binding protein 2-beta</fullName>
    </alternativeName>
</protein>
<accession>Q92481</accession>
<accession>Q5JYX6</accession>
<accession>Q9NQ63</accession>
<accession>Q9NU99</accession>
<accession>Q9UJI7</accession>
<accession>Q9Y214</accession>
<accession>Q9Y3K3</accession>
<feature type="chain" id="PRO_0000184801" description="Transcription factor AP-2-beta">
    <location>
        <begin position="1"/>
        <end position="460"/>
    </location>
</feature>
<feature type="region of interest" description="Disordered" evidence="3">
    <location>
        <begin position="30"/>
        <end position="139"/>
    </location>
</feature>
<feature type="region of interest" description="Disordered" evidence="3">
    <location>
        <begin position="435"/>
        <end position="460"/>
    </location>
</feature>
<feature type="compositionally biased region" description="Polar residues" evidence="3">
    <location>
        <begin position="35"/>
        <end position="51"/>
    </location>
</feature>
<feature type="compositionally biased region" description="Low complexity" evidence="3">
    <location>
        <begin position="121"/>
        <end position="132"/>
    </location>
</feature>
<feature type="compositionally biased region" description="Basic and acidic residues" evidence="3">
    <location>
        <begin position="451"/>
        <end position="460"/>
    </location>
</feature>
<feature type="modified residue" description="Phosphoserine; by PKA" evidence="1">
    <location>
        <position position="258"/>
    </location>
</feature>
<feature type="cross-link" description="Glycyl lysine isopeptide (Lys-Gly) (interchain with G-Cter in SUMO)" evidence="14">
    <location>
        <position position="21"/>
    </location>
</feature>
<feature type="splice variant" id="VSP_006408" description="In isoform 2." evidence="14">
    <original>E</original>
    <variation>EMLVHTYSSM</variation>
    <location>
        <position position="27"/>
    </location>
</feature>
<feature type="sequence variant" id="VAR_016977" description="In CHAR; dbSNP:rs80338910." evidence="5">
    <original>P</original>
    <variation>R</variation>
    <location>
        <position position="73"/>
    </location>
</feature>
<feature type="sequence variant" id="VAR_016978" description="In CHAR; dbSNP:rs80338912." evidence="5">
    <original>R</original>
    <variation>C</variation>
    <location>
        <position position="236"/>
    </location>
</feature>
<feature type="sequence variant" id="VAR_016979" description="In CHAR; dbSNP:rs80338912." evidence="5">
    <original>R</original>
    <variation>S</variation>
    <location>
        <position position="236"/>
    </location>
</feature>
<feature type="sequence variant" id="VAR_011318" description="In CHAR; dbSNP:rs80338914." evidence="4">
    <original>A</original>
    <variation>D</variation>
    <location>
        <position position="275"/>
    </location>
</feature>
<feature type="sequence variant" id="VAR_016980" description="In CHAR; dbSNP:rs80338915." evidence="5">
    <original>R</original>
    <variation>Q</variation>
    <location>
        <position position="285"/>
    </location>
</feature>
<feature type="sequence variant" id="VAR_011319" description="In CHAR; dbSNP:rs80338917." evidence="4">
    <original>R</original>
    <variation>C</variation>
    <location>
        <position position="300"/>
    </location>
</feature>
<feature type="sequence conflict" description="In Ref. 1; CAA71047." evidence="14" ref="1">
    <original>S</original>
    <variation>A</variation>
    <location>
        <position position="258"/>
    </location>
</feature>
<feature type="sequence conflict" description="In Ref. 1; CAA71047." evidence="14" ref="1">
    <original>QLCKEFTDLLAQDRTPIGNSRPSPILEPGIQSCLTHFSLITHGFGAPAICAALTALQNYLTEALKGMDKMFLNNTTTNRHTSGEGPGSKTGDKEEKHRK</original>
    <variation>GNFVKNLRIYWRRTGHR</variation>
    <location>
        <begin position="362"/>
        <end position="460"/>
    </location>
</feature>
<feature type="strand" evidence="16">
    <location>
        <begin position="226"/>
        <end position="234"/>
    </location>
</feature>
<feature type="strand" evidence="16">
    <location>
        <begin position="245"/>
        <end position="249"/>
    </location>
</feature>
<feature type="helix" evidence="16">
    <location>
        <begin position="250"/>
        <end position="257"/>
    </location>
</feature>
<feature type="turn" evidence="16">
    <location>
        <begin position="259"/>
        <end position="261"/>
    </location>
</feature>
<feature type="helix" evidence="16">
    <location>
        <begin position="265"/>
        <end position="271"/>
    </location>
</feature>
<feature type="helix" evidence="16">
    <location>
        <begin position="280"/>
        <end position="290"/>
    </location>
</feature>
<feature type="helix" evidence="16">
    <location>
        <begin position="307"/>
        <end position="310"/>
    </location>
</feature>
<feature type="helix" evidence="16">
    <location>
        <begin position="313"/>
        <end position="330"/>
    </location>
</feature>
<feature type="helix" evidence="16">
    <location>
        <begin position="333"/>
        <end position="342"/>
    </location>
</feature>
<feature type="helix" evidence="16">
    <location>
        <begin position="349"/>
        <end position="373"/>
    </location>
</feature>
<feature type="helix" evidence="16">
    <location>
        <begin position="389"/>
        <end position="402"/>
    </location>
</feature>
<feature type="helix" evidence="16">
    <location>
        <begin position="406"/>
        <end position="431"/>
    </location>
</feature>
<gene>
    <name type="primary">TFAP2B</name>
</gene>
<evidence type="ECO:0000250" key="1"/>
<evidence type="ECO:0000250" key="2">
    <source>
        <dbReference type="UniProtKB" id="Q61313"/>
    </source>
</evidence>
<evidence type="ECO:0000256" key="3">
    <source>
        <dbReference type="SAM" id="MobiDB-lite"/>
    </source>
</evidence>
<evidence type="ECO:0000269" key="4">
    <source>
    </source>
</evidence>
<evidence type="ECO:0000269" key="5">
    <source>
    </source>
</evidence>
<evidence type="ECO:0000269" key="6">
    <source>
    </source>
</evidence>
<evidence type="ECO:0000269" key="7">
    <source>
    </source>
</evidence>
<evidence type="ECO:0000269" key="8">
    <source>
    </source>
</evidence>
<evidence type="ECO:0000269" key="9">
    <source>
    </source>
</evidence>
<evidence type="ECO:0000269" key="10">
    <source>
    </source>
</evidence>
<evidence type="ECO:0000269" key="11">
    <source>
    </source>
</evidence>
<evidence type="ECO:0000269" key="12">
    <source>
    </source>
</evidence>
<evidence type="ECO:0000269" key="13">
    <source>
    </source>
</evidence>
<evidence type="ECO:0000305" key="14"/>
<evidence type="ECO:0000305" key="15">
    <source>
    </source>
</evidence>
<evidence type="ECO:0007829" key="16">
    <source>
        <dbReference type="PDB" id="8J0Q"/>
    </source>
</evidence>